<name>IMPCT_DICDI</name>
<protein>
    <recommendedName>
        <fullName>Protein IMPACT homolog</fullName>
    </recommendedName>
</protein>
<feature type="chain" id="PRO_0000330859" description="Protein IMPACT homolog">
    <location>
        <begin position="1"/>
        <end position="345"/>
    </location>
</feature>
<feature type="domain" description="RWD" evidence="2">
    <location>
        <begin position="7"/>
        <end position="155"/>
    </location>
</feature>
<feature type="region of interest" description="Disordered" evidence="3">
    <location>
        <begin position="191"/>
        <end position="211"/>
    </location>
</feature>
<feature type="compositionally biased region" description="Low complexity" evidence="3">
    <location>
        <begin position="191"/>
        <end position="202"/>
    </location>
</feature>
<keyword id="KW-0963">Cytoplasm</keyword>
<keyword id="KW-1185">Reference proteome</keyword>
<keyword id="KW-0678">Repressor</keyword>
<keyword id="KW-0346">Stress response</keyword>
<keyword id="KW-0810">Translation regulation</keyword>
<reference key="1">
    <citation type="journal article" date="2005" name="Nature">
        <title>The genome of the social amoeba Dictyostelium discoideum.</title>
        <authorList>
            <person name="Eichinger L."/>
            <person name="Pachebat J.A."/>
            <person name="Gloeckner G."/>
            <person name="Rajandream M.A."/>
            <person name="Sucgang R."/>
            <person name="Berriman M."/>
            <person name="Song J."/>
            <person name="Olsen R."/>
            <person name="Szafranski K."/>
            <person name="Xu Q."/>
            <person name="Tunggal B."/>
            <person name="Kummerfeld S."/>
            <person name="Madera M."/>
            <person name="Konfortov B.A."/>
            <person name="Rivero F."/>
            <person name="Bankier A.T."/>
            <person name="Lehmann R."/>
            <person name="Hamlin N."/>
            <person name="Davies R."/>
            <person name="Gaudet P."/>
            <person name="Fey P."/>
            <person name="Pilcher K."/>
            <person name="Chen G."/>
            <person name="Saunders D."/>
            <person name="Sodergren E.J."/>
            <person name="Davis P."/>
            <person name="Kerhornou A."/>
            <person name="Nie X."/>
            <person name="Hall N."/>
            <person name="Anjard C."/>
            <person name="Hemphill L."/>
            <person name="Bason N."/>
            <person name="Farbrother P."/>
            <person name="Desany B."/>
            <person name="Just E."/>
            <person name="Morio T."/>
            <person name="Rost R."/>
            <person name="Churcher C.M."/>
            <person name="Cooper J."/>
            <person name="Haydock S."/>
            <person name="van Driessche N."/>
            <person name="Cronin A."/>
            <person name="Goodhead I."/>
            <person name="Muzny D.M."/>
            <person name="Mourier T."/>
            <person name="Pain A."/>
            <person name="Lu M."/>
            <person name="Harper D."/>
            <person name="Lindsay R."/>
            <person name="Hauser H."/>
            <person name="James K.D."/>
            <person name="Quiles M."/>
            <person name="Madan Babu M."/>
            <person name="Saito T."/>
            <person name="Buchrieser C."/>
            <person name="Wardroper A."/>
            <person name="Felder M."/>
            <person name="Thangavelu M."/>
            <person name="Johnson D."/>
            <person name="Knights A."/>
            <person name="Loulseged H."/>
            <person name="Mungall K.L."/>
            <person name="Oliver K."/>
            <person name="Price C."/>
            <person name="Quail M.A."/>
            <person name="Urushihara H."/>
            <person name="Hernandez J."/>
            <person name="Rabbinowitsch E."/>
            <person name="Steffen D."/>
            <person name="Sanders M."/>
            <person name="Ma J."/>
            <person name="Kohara Y."/>
            <person name="Sharp S."/>
            <person name="Simmonds M.N."/>
            <person name="Spiegler S."/>
            <person name="Tivey A."/>
            <person name="Sugano S."/>
            <person name="White B."/>
            <person name="Walker D."/>
            <person name="Woodward J.R."/>
            <person name="Winckler T."/>
            <person name="Tanaka Y."/>
            <person name="Shaulsky G."/>
            <person name="Schleicher M."/>
            <person name="Weinstock G.M."/>
            <person name="Rosenthal A."/>
            <person name="Cox E.C."/>
            <person name="Chisholm R.L."/>
            <person name="Gibbs R.A."/>
            <person name="Loomis W.F."/>
            <person name="Platzer M."/>
            <person name="Kay R.R."/>
            <person name="Williams J.G."/>
            <person name="Dear P.H."/>
            <person name="Noegel A.A."/>
            <person name="Barrell B.G."/>
            <person name="Kuspa A."/>
        </authorList>
    </citation>
    <scope>NUCLEOTIDE SEQUENCE [LARGE SCALE GENOMIC DNA]</scope>
    <source>
        <strain>AX4</strain>
    </source>
</reference>
<gene>
    <name type="primary">impact</name>
    <name type="ORF">DDB_G0287757</name>
</gene>
<evidence type="ECO:0000250" key="1">
    <source>
        <dbReference type="UniProtKB" id="O55091"/>
    </source>
</evidence>
<evidence type="ECO:0000255" key="2">
    <source>
        <dbReference type="PROSITE-ProRule" id="PRU00179"/>
    </source>
</evidence>
<evidence type="ECO:0000256" key="3">
    <source>
        <dbReference type="SAM" id="MobiDB-lite"/>
    </source>
</evidence>
<evidence type="ECO:0000305" key="4"/>
<comment type="function">
    <text evidence="1">Translational regulator that ensures constant high levels of translation under amino acid starvation. Plays a role as a negative regulator of the EIF2AK4/GCN2 kinase activity; impairs GCN1-mediated EIF2AK4/GCN2 activation, and hence EIF2AK4/GCN2-mediated eIF-2-alpha phosphorylation and subsequent down-regulation of protein synthesis.</text>
</comment>
<comment type="subunit">
    <text evidence="1">Interacts with GCN1; prevents the interaction of GCN1 with EIF2AK4/GCN2 and inhibits EIF2AK4/GCN2 kinase activity. Interaction with RPL39; this interaction occurs in a GCN1-independent manner. Associates with ribosomes; this interaction occurs in a GCN1-independent manner. Associates with actin; this interaction occurs in a GCN1-independent manner.</text>
</comment>
<comment type="subcellular location">
    <subcellularLocation>
        <location evidence="1">Cytoplasm</location>
    </subcellularLocation>
</comment>
<comment type="similarity">
    <text evidence="4">Belongs to the IMPACT family.</text>
</comment>
<organism>
    <name type="scientific">Dictyostelium discoideum</name>
    <name type="common">Social amoeba</name>
    <dbReference type="NCBI Taxonomy" id="44689"/>
    <lineage>
        <taxon>Eukaryota</taxon>
        <taxon>Amoebozoa</taxon>
        <taxon>Evosea</taxon>
        <taxon>Eumycetozoa</taxon>
        <taxon>Dictyostelia</taxon>
        <taxon>Dictyosteliales</taxon>
        <taxon>Dictyosteliaceae</taxon>
        <taxon>Dictyostelium</taxon>
    </lineage>
</organism>
<proteinExistence type="inferred from homology"/>
<accession>Q54JW9</accession>
<sequence>MNEEQENEILAISSIYPDSFSEIETIVGEEENDGFEDNDSQYSKIYQVIITPNISCLDENSLEDNNNSNNNNNNNNNNNNNGLIIDTSYDYLIYFKFKYTKEYPSNEPPIISIKATWLQKSDQSILLSHLEDLWNQNELVIFQMISWLQEESIEILNNHYKSIKKFSHYHLKKSLNTQQLNQNQNQFENQNQNQNQNQNQNQNKEKEKEKVPTIYTGQSVTEKKSKFQAHLAIVHSEREVQLVLNQLLSFKKIYEATHNMYAYRFQLENGEINEYYNDDGEDGAGDKMLFTLSKNQAKEILIVCTRWFGGILLGGRRYVHIVNTTKDILNLYNTNSLSQCSLEFN</sequence>
<dbReference type="EMBL" id="AAFI02000104">
    <property type="protein sequence ID" value="EAL63525.1"/>
    <property type="molecule type" value="Genomic_DNA"/>
</dbReference>
<dbReference type="RefSeq" id="XP_637033.1">
    <property type="nucleotide sequence ID" value="XM_631941.1"/>
</dbReference>
<dbReference type="FunCoup" id="Q54JW9">
    <property type="interactions" value="69"/>
</dbReference>
<dbReference type="STRING" id="44689.Q54JW9"/>
<dbReference type="PaxDb" id="44689-DDB0302508"/>
<dbReference type="EnsemblProtists" id="EAL63525">
    <property type="protein sequence ID" value="EAL63525"/>
    <property type="gene ID" value="DDB_G0287757"/>
</dbReference>
<dbReference type="GeneID" id="8626287"/>
<dbReference type="KEGG" id="ddi:DDB_G0287757"/>
<dbReference type="dictyBase" id="DDB_G0287757"/>
<dbReference type="VEuPathDB" id="AmoebaDB:DDB_G0287757"/>
<dbReference type="eggNOG" id="KOG3299">
    <property type="taxonomic scope" value="Eukaryota"/>
</dbReference>
<dbReference type="HOGENOM" id="CLU_805176_0_0_1"/>
<dbReference type="InParanoid" id="Q54JW9"/>
<dbReference type="OMA" id="FRHICNL"/>
<dbReference type="PhylomeDB" id="Q54JW9"/>
<dbReference type="PRO" id="PR:Q54JW9"/>
<dbReference type="Proteomes" id="UP000002195">
    <property type="component" value="Chromosome 5"/>
</dbReference>
<dbReference type="GO" id="GO:0005737">
    <property type="term" value="C:cytoplasm"/>
    <property type="evidence" value="ECO:0000318"/>
    <property type="project" value="GO_Central"/>
</dbReference>
<dbReference type="GO" id="GO:0140311">
    <property type="term" value="F:protein sequestering activity"/>
    <property type="evidence" value="ECO:0000250"/>
    <property type="project" value="UniProtKB"/>
</dbReference>
<dbReference type="GO" id="GO:0034198">
    <property type="term" value="P:cellular response to amino acid starvation"/>
    <property type="evidence" value="ECO:0000250"/>
    <property type="project" value="UniProtKB"/>
</dbReference>
<dbReference type="GO" id="GO:0140469">
    <property type="term" value="P:GCN2-mediated signaling"/>
    <property type="evidence" value="ECO:0000318"/>
    <property type="project" value="GO_Central"/>
</dbReference>
<dbReference type="GO" id="GO:1990611">
    <property type="term" value="P:regulation of cytoplasmic translational initiation in response to stress"/>
    <property type="evidence" value="ECO:0000250"/>
    <property type="project" value="UniProtKB"/>
</dbReference>
<dbReference type="GO" id="GO:0006446">
    <property type="term" value="P:regulation of translational initiation"/>
    <property type="evidence" value="ECO:0000318"/>
    <property type="project" value="GO_Central"/>
</dbReference>
<dbReference type="CDD" id="cd23820">
    <property type="entry name" value="RWD_RNF14"/>
    <property type="match status" value="1"/>
</dbReference>
<dbReference type="Gene3D" id="3.30.230.30">
    <property type="entry name" value="Impact, N-terminal domain"/>
    <property type="match status" value="1"/>
</dbReference>
<dbReference type="Gene3D" id="3.10.110.10">
    <property type="entry name" value="Ubiquitin Conjugating Enzyme"/>
    <property type="match status" value="1"/>
</dbReference>
<dbReference type="InterPro" id="IPR023582">
    <property type="entry name" value="Impact"/>
</dbReference>
<dbReference type="InterPro" id="IPR001498">
    <property type="entry name" value="Impact_N"/>
</dbReference>
<dbReference type="InterPro" id="IPR036956">
    <property type="entry name" value="Impact_N_sf"/>
</dbReference>
<dbReference type="InterPro" id="IPR020568">
    <property type="entry name" value="Ribosomal_Su5_D2-typ_SF"/>
</dbReference>
<dbReference type="InterPro" id="IPR006575">
    <property type="entry name" value="RWD_dom"/>
</dbReference>
<dbReference type="InterPro" id="IPR016135">
    <property type="entry name" value="UBQ-conjugating_enzyme/RWD"/>
</dbReference>
<dbReference type="PANTHER" id="PTHR16301">
    <property type="entry name" value="IMPACT-RELATED"/>
    <property type="match status" value="1"/>
</dbReference>
<dbReference type="PANTHER" id="PTHR16301:SF25">
    <property type="entry name" value="PROTEIN IMPACT"/>
    <property type="match status" value="1"/>
</dbReference>
<dbReference type="Pfam" id="PF05773">
    <property type="entry name" value="RWD"/>
    <property type="match status" value="1"/>
</dbReference>
<dbReference type="Pfam" id="PF01205">
    <property type="entry name" value="UPF0029"/>
    <property type="match status" value="1"/>
</dbReference>
<dbReference type="SMART" id="SM00591">
    <property type="entry name" value="RWD"/>
    <property type="match status" value="1"/>
</dbReference>
<dbReference type="SUPFAM" id="SSF54211">
    <property type="entry name" value="Ribosomal protein S5 domain 2-like"/>
    <property type="match status" value="1"/>
</dbReference>
<dbReference type="SUPFAM" id="SSF54495">
    <property type="entry name" value="UBC-like"/>
    <property type="match status" value="1"/>
</dbReference>
<dbReference type="PROSITE" id="PS50908">
    <property type="entry name" value="RWD"/>
    <property type="match status" value="1"/>
</dbReference>